<reference key="1">
    <citation type="submission" date="2007-08" db="EMBL/GenBank/DDBJ databases">
        <title>Complete sequence of Shewanella sediminis HAW-EB3.</title>
        <authorList>
            <consortium name="US DOE Joint Genome Institute"/>
            <person name="Copeland A."/>
            <person name="Lucas S."/>
            <person name="Lapidus A."/>
            <person name="Barry K."/>
            <person name="Glavina del Rio T."/>
            <person name="Dalin E."/>
            <person name="Tice H."/>
            <person name="Pitluck S."/>
            <person name="Chertkov O."/>
            <person name="Brettin T."/>
            <person name="Bruce D."/>
            <person name="Detter J.C."/>
            <person name="Han C."/>
            <person name="Schmutz J."/>
            <person name="Larimer F."/>
            <person name="Land M."/>
            <person name="Hauser L."/>
            <person name="Kyrpides N."/>
            <person name="Kim E."/>
            <person name="Zhao J.-S."/>
            <person name="Richardson P."/>
        </authorList>
    </citation>
    <scope>NUCLEOTIDE SEQUENCE [LARGE SCALE GENOMIC DNA]</scope>
    <source>
        <strain>HAW-EB3</strain>
    </source>
</reference>
<proteinExistence type="inferred from homology"/>
<organism>
    <name type="scientific">Shewanella sediminis (strain HAW-EB3)</name>
    <dbReference type="NCBI Taxonomy" id="425104"/>
    <lineage>
        <taxon>Bacteria</taxon>
        <taxon>Pseudomonadati</taxon>
        <taxon>Pseudomonadota</taxon>
        <taxon>Gammaproteobacteria</taxon>
        <taxon>Alteromonadales</taxon>
        <taxon>Shewanellaceae</taxon>
        <taxon>Shewanella</taxon>
    </lineage>
</organism>
<feature type="chain" id="PRO_1000076288" description="Histidine--tRNA ligase">
    <location>
        <begin position="1"/>
        <end position="424"/>
    </location>
</feature>
<gene>
    <name evidence="1" type="primary">hisS</name>
    <name type="ordered locus">Ssed_1433</name>
</gene>
<comment type="catalytic activity">
    <reaction evidence="1">
        <text>tRNA(His) + L-histidine + ATP = L-histidyl-tRNA(His) + AMP + diphosphate + H(+)</text>
        <dbReference type="Rhea" id="RHEA:17313"/>
        <dbReference type="Rhea" id="RHEA-COMP:9665"/>
        <dbReference type="Rhea" id="RHEA-COMP:9689"/>
        <dbReference type="ChEBI" id="CHEBI:15378"/>
        <dbReference type="ChEBI" id="CHEBI:30616"/>
        <dbReference type="ChEBI" id="CHEBI:33019"/>
        <dbReference type="ChEBI" id="CHEBI:57595"/>
        <dbReference type="ChEBI" id="CHEBI:78442"/>
        <dbReference type="ChEBI" id="CHEBI:78527"/>
        <dbReference type="ChEBI" id="CHEBI:456215"/>
        <dbReference type="EC" id="6.1.1.21"/>
    </reaction>
</comment>
<comment type="subunit">
    <text evidence="1">Homodimer.</text>
</comment>
<comment type="subcellular location">
    <subcellularLocation>
        <location evidence="1">Cytoplasm</location>
    </subcellularLocation>
</comment>
<comment type="similarity">
    <text evidence="1">Belongs to the class-II aminoacyl-tRNA synthetase family.</text>
</comment>
<protein>
    <recommendedName>
        <fullName evidence="1">Histidine--tRNA ligase</fullName>
        <ecNumber evidence="1">6.1.1.21</ecNumber>
    </recommendedName>
    <alternativeName>
        <fullName evidence="1">Histidyl-tRNA synthetase</fullName>
        <shortName evidence="1">HisRS</shortName>
    </alternativeName>
</protein>
<evidence type="ECO:0000255" key="1">
    <source>
        <dbReference type="HAMAP-Rule" id="MF_00127"/>
    </source>
</evidence>
<accession>A8FT71</accession>
<sequence length="424" mass="47795">MAKQIQAIRGMNDILPTQSPLWQKLETVLRETVSAYGYSEIRTPIVESTDLFKRSIGEVTDIVEKEMYTFDDRNGDSLTLRPEGTASTVRAGNEHGLLYNQEQRLWYMGPMFRHERPQKGRYRQFNQFGVEVYGIGSADVDAEVLMLSHRLWEKLGITEHVTLELNTLGDPAERAAYRDALIAYLEQFKEQLDEESQRRMYTNPLRVLDTKNPDVQALLTDAPELMEYLGEETRAHFSHLCELLDAVGIKYVINPRLVRGLDYYNRTVFEWVTSSLGAQGTVLAGGRYDGLVEQLGGKNTPAVGFAMGLERIVLMLETLELTKDIPATVDVYVTAMGDASKIEAIKIAQSLRSELPHLRVMSHCGGGNFKKQMKRADKSGAQVALVIGEDELANNQVAVKYLREKKEQELVARDALATYIAELI</sequence>
<dbReference type="EC" id="6.1.1.21" evidence="1"/>
<dbReference type="EMBL" id="CP000821">
    <property type="protein sequence ID" value="ABV36044.1"/>
    <property type="molecule type" value="Genomic_DNA"/>
</dbReference>
<dbReference type="RefSeq" id="WP_012141780.1">
    <property type="nucleotide sequence ID" value="NC_009831.1"/>
</dbReference>
<dbReference type="SMR" id="A8FT71"/>
<dbReference type="STRING" id="425104.Ssed_1433"/>
<dbReference type="KEGG" id="sse:Ssed_1433"/>
<dbReference type="eggNOG" id="COG0124">
    <property type="taxonomic scope" value="Bacteria"/>
</dbReference>
<dbReference type="HOGENOM" id="CLU_025113_1_1_6"/>
<dbReference type="OrthoDB" id="9800814at2"/>
<dbReference type="Proteomes" id="UP000002015">
    <property type="component" value="Chromosome"/>
</dbReference>
<dbReference type="GO" id="GO:0005737">
    <property type="term" value="C:cytoplasm"/>
    <property type="evidence" value="ECO:0007669"/>
    <property type="project" value="UniProtKB-SubCell"/>
</dbReference>
<dbReference type="GO" id="GO:0005524">
    <property type="term" value="F:ATP binding"/>
    <property type="evidence" value="ECO:0007669"/>
    <property type="project" value="UniProtKB-UniRule"/>
</dbReference>
<dbReference type="GO" id="GO:0004821">
    <property type="term" value="F:histidine-tRNA ligase activity"/>
    <property type="evidence" value="ECO:0007669"/>
    <property type="project" value="UniProtKB-UniRule"/>
</dbReference>
<dbReference type="GO" id="GO:0006427">
    <property type="term" value="P:histidyl-tRNA aminoacylation"/>
    <property type="evidence" value="ECO:0007669"/>
    <property type="project" value="UniProtKB-UniRule"/>
</dbReference>
<dbReference type="CDD" id="cd00773">
    <property type="entry name" value="HisRS-like_core"/>
    <property type="match status" value="1"/>
</dbReference>
<dbReference type="CDD" id="cd00859">
    <property type="entry name" value="HisRS_anticodon"/>
    <property type="match status" value="1"/>
</dbReference>
<dbReference type="FunFam" id="3.30.930.10:FF:000005">
    <property type="entry name" value="Histidine--tRNA ligase"/>
    <property type="match status" value="1"/>
</dbReference>
<dbReference type="Gene3D" id="3.40.50.800">
    <property type="entry name" value="Anticodon-binding domain"/>
    <property type="match status" value="1"/>
</dbReference>
<dbReference type="Gene3D" id="3.30.930.10">
    <property type="entry name" value="Bira Bifunctional Protein, Domain 2"/>
    <property type="match status" value="1"/>
</dbReference>
<dbReference type="HAMAP" id="MF_00127">
    <property type="entry name" value="His_tRNA_synth"/>
    <property type="match status" value="1"/>
</dbReference>
<dbReference type="InterPro" id="IPR006195">
    <property type="entry name" value="aa-tRNA-synth_II"/>
</dbReference>
<dbReference type="InterPro" id="IPR045864">
    <property type="entry name" value="aa-tRNA-synth_II/BPL/LPL"/>
</dbReference>
<dbReference type="InterPro" id="IPR004154">
    <property type="entry name" value="Anticodon-bd"/>
</dbReference>
<dbReference type="InterPro" id="IPR036621">
    <property type="entry name" value="Anticodon-bd_dom_sf"/>
</dbReference>
<dbReference type="InterPro" id="IPR015807">
    <property type="entry name" value="His-tRNA-ligase"/>
</dbReference>
<dbReference type="InterPro" id="IPR041715">
    <property type="entry name" value="HisRS-like_core"/>
</dbReference>
<dbReference type="InterPro" id="IPR004516">
    <property type="entry name" value="HisRS/HisZ"/>
</dbReference>
<dbReference type="InterPro" id="IPR033656">
    <property type="entry name" value="HisRS_anticodon"/>
</dbReference>
<dbReference type="NCBIfam" id="TIGR00442">
    <property type="entry name" value="hisS"/>
    <property type="match status" value="1"/>
</dbReference>
<dbReference type="PANTHER" id="PTHR43707:SF1">
    <property type="entry name" value="HISTIDINE--TRNA LIGASE, MITOCHONDRIAL-RELATED"/>
    <property type="match status" value="1"/>
</dbReference>
<dbReference type="PANTHER" id="PTHR43707">
    <property type="entry name" value="HISTIDYL-TRNA SYNTHETASE"/>
    <property type="match status" value="1"/>
</dbReference>
<dbReference type="Pfam" id="PF03129">
    <property type="entry name" value="HGTP_anticodon"/>
    <property type="match status" value="1"/>
</dbReference>
<dbReference type="Pfam" id="PF13393">
    <property type="entry name" value="tRNA-synt_His"/>
    <property type="match status" value="1"/>
</dbReference>
<dbReference type="PIRSF" id="PIRSF001549">
    <property type="entry name" value="His-tRNA_synth"/>
    <property type="match status" value="1"/>
</dbReference>
<dbReference type="SUPFAM" id="SSF52954">
    <property type="entry name" value="Class II aaRS ABD-related"/>
    <property type="match status" value="1"/>
</dbReference>
<dbReference type="SUPFAM" id="SSF55681">
    <property type="entry name" value="Class II aaRS and biotin synthetases"/>
    <property type="match status" value="1"/>
</dbReference>
<dbReference type="PROSITE" id="PS50862">
    <property type="entry name" value="AA_TRNA_LIGASE_II"/>
    <property type="match status" value="1"/>
</dbReference>
<name>SYH_SHESH</name>
<keyword id="KW-0030">Aminoacyl-tRNA synthetase</keyword>
<keyword id="KW-0067">ATP-binding</keyword>
<keyword id="KW-0963">Cytoplasm</keyword>
<keyword id="KW-0436">Ligase</keyword>
<keyword id="KW-0547">Nucleotide-binding</keyword>
<keyword id="KW-0648">Protein biosynthesis</keyword>
<keyword id="KW-1185">Reference proteome</keyword>